<dbReference type="EC" id="6.3.5.-" evidence="1"/>
<dbReference type="EMBL" id="AE017308">
    <property type="protein sequence ID" value="AAT27862.1"/>
    <property type="molecule type" value="Genomic_DNA"/>
</dbReference>
<dbReference type="RefSeq" id="WP_011264896.1">
    <property type="nucleotide sequence ID" value="NC_006908.1"/>
</dbReference>
<dbReference type="SMR" id="Q6KHR6"/>
<dbReference type="STRING" id="267748.MMOB3760"/>
<dbReference type="KEGG" id="mmo:MMOB3760"/>
<dbReference type="eggNOG" id="COG0064">
    <property type="taxonomic scope" value="Bacteria"/>
</dbReference>
<dbReference type="HOGENOM" id="CLU_019240_0_0_14"/>
<dbReference type="OrthoDB" id="9804078at2"/>
<dbReference type="Proteomes" id="UP000009072">
    <property type="component" value="Chromosome"/>
</dbReference>
<dbReference type="GO" id="GO:0050566">
    <property type="term" value="F:asparaginyl-tRNA synthase (glutamine-hydrolyzing) activity"/>
    <property type="evidence" value="ECO:0007669"/>
    <property type="project" value="RHEA"/>
</dbReference>
<dbReference type="GO" id="GO:0005524">
    <property type="term" value="F:ATP binding"/>
    <property type="evidence" value="ECO:0007669"/>
    <property type="project" value="UniProtKB-KW"/>
</dbReference>
<dbReference type="GO" id="GO:0050567">
    <property type="term" value="F:glutaminyl-tRNA synthase (glutamine-hydrolyzing) activity"/>
    <property type="evidence" value="ECO:0007669"/>
    <property type="project" value="UniProtKB-UniRule"/>
</dbReference>
<dbReference type="GO" id="GO:0070681">
    <property type="term" value="P:glutaminyl-tRNAGln biosynthesis via transamidation"/>
    <property type="evidence" value="ECO:0007669"/>
    <property type="project" value="TreeGrafter"/>
</dbReference>
<dbReference type="GO" id="GO:0006412">
    <property type="term" value="P:translation"/>
    <property type="evidence" value="ECO:0007669"/>
    <property type="project" value="UniProtKB-UniRule"/>
</dbReference>
<dbReference type="Gene3D" id="1.10.10.410">
    <property type="match status" value="1"/>
</dbReference>
<dbReference type="HAMAP" id="MF_00121">
    <property type="entry name" value="GatB"/>
    <property type="match status" value="1"/>
</dbReference>
<dbReference type="InterPro" id="IPR017959">
    <property type="entry name" value="Asn/Gln-tRNA_amidoTrfase_suB/E"/>
</dbReference>
<dbReference type="InterPro" id="IPR006075">
    <property type="entry name" value="Asn/Gln-tRNA_Trfase_suB/E_cat"/>
</dbReference>
<dbReference type="InterPro" id="IPR018027">
    <property type="entry name" value="Asn/Gln_amidotransferase"/>
</dbReference>
<dbReference type="InterPro" id="IPR003789">
    <property type="entry name" value="Asn/Gln_tRNA_amidoTrase-B-like"/>
</dbReference>
<dbReference type="InterPro" id="IPR004413">
    <property type="entry name" value="GatB"/>
</dbReference>
<dbReference type="InterPro" id="IPR023168">
    <property type="entry name" value="GatB_Yqey_C_2"/>
</dbReference>
<dbReference type="InterPro" id="IPR017958">
    <property type="entry name" value="Gln-tRNA_amidoTrfase_suB_CS"/>
</dbReference>
<dbReference type="InterPro" id="IPR014746">
    <property type="entry name" value="Gln_synth/guanido_kin_cat_dom"/>
</dbReference>
<dbReference type="NCBIfam" id="TIGR00133">
    <property type="entry name" value="gatB"/>
    <property type="match status" value="1"/>
</dbReference>
<dbReference type="NCBIfam" id="NF004012">
    <property type="entry name" value="PRK05477.1-2"/>
    <property type="match status" value="1"/>
</dbReference>
<dbReference type="NCBIfam" id="NF004014">
    <property type="entry name" value="PRK05477.1-4"/>
    <property type="match status" value="1"/>
</dbReference>
<dbReference type="PANTHER" id="PTHR11659">
    <property type="entry name" value="GLUTAMYL-TRNA GLN AMIDOTRANSFERASE SUBUNIT B MITOCHONDRIAL AND PROKARYOTIC PET112-RELATED"/>
    <property type="match status" value="1"/>
</dbReference>
<dbReference type="PANTHER" id="PTHR11659:SF0">
    <property type="entry name" value="GLUTAMYL-TRNA(GLN) AMIDOTRANSFERASE SUBUNIT B, MITOCHONDRIAL"/>
    <property type="match status" value="1"/>
</dbReference>
<dbReference type="Pfam" id="PF02934">
    <property type="entry name" value="GatB_N"/>
    <property type="match status" value="1"/>
</dbReference>
<dbReference type="Pfam" id="PF02637">
    <property type="entry name" value="GatB_Yqey"/>
    <property type="match status" value="1"/>
</dbReference>
<dbReference type="SMART" id="SM00845">
    <property type="entry name" value="GatB_Yqey"/>
    <property type="match status" value="1"/>
</dbReference>
<dbReference type="SUPFAM" id="SSF89095">
    <property type="entry name" value="GatB/YqeY motif"/>
    <property type="match status" value="1"/>
</dbReference>
<dbReference type="SUPFAM" id="SSF55931">
    <property type="entry name" value="Glutamine synthetase/guanido kinase"/>
    <property type="match status" value="1"/>
</dbReference>
<dbReference type="PROSITE" id="PS01234">
    <property type="entry name" value="GATB"/>
    <property type="match status" value="1"/>
</dbReference>
<proteinExistence type="inferred from homology"/>
<reference key="1">
    <citation type="journal article" date="2004" name="Genome Res.">
        <title>The complete genome and proteome of Mycoplasma mobile.</title>
        <authorList>
            <person name="Jaffe J.D."/>
            <person name="Stange-Thomann N."/>
            <person name="Smith C."/>
            <person name="DeCaprio D."/>
            <person name="Fisher S."/>
            <person name="Butler J."/>
            <person name="Calvo S."/>
            <person name="Elkins T."/>
            <person name="FitzGerald M.G."/>
            <person name="Hafez N."/>
            <person name="Kodira C.D."/>
            <person name="Major J."/>
            <person name="Wang S."/>
            <person name="Wilkinson J."/>
            <person name="Nicol R."/>
            <person name="Nusbaum C."/>
            <person name="Birren B."/>
            <person name="Berg H.C."/>
            <person name="Church G.M."/>
        </authorList>
    </citation>
    <scope>NUCLEOTIDE SEQUENCE [LARGE SCALE GENOMIC DNA]</scope>
    <source>
        <strain>ATCC 43663 / NCTC 11711 / 163 K</strain>
    </source>
</reference>
<comment type="function">
    <text evidence="1">Allows the formation of correctly charged Asn-tRNA(Asn) or Gln-tRNA(Gln) through the transamidation of misacylated Asp-tRNA(Asn) or Glu-tRNA(Gln) in organisms which lack either or both of asparaginyl-tRNA or glutaminyl-tRNA synthetases. The reaction takes place in the presence of glutamine and ATP through an activated phospho-Asp-tRNA(Asn) or phospho-Glu-tRNA(Gln).</text>
</comment>
<comment type="catalytic activity">
    <reaction evidence="1">
        <text>L-glutamyl-tRNA(Gln) + L-glutamine + ATP + H2O = L-glutaminyl-tRNA(Gln) + L-glutamate + ADP + phosphate + H(+)</text>
        <dbReference type="Rhea" id="RHEA:17521"/>
        <dbReference type="Rhea" id="RHEA-COMP:9681"/>
        <dbReference type="Rhea" id="RHEA-COMP:9684"/>
        <dbReference type="ChEBI" id="CHEBI:15377"/>
        <dbReference type="ChEBI" id="CHEBI:15378"/>
        <dbReference type="ChEBI" id="CHEBI:29985"/>
        <dbReference type="ChEBI" id="CHEBI:30616"/>
        <dbReference type="ChEBI" id="CHEBI:43474"/>
        <dbReference type="ChEBI" id="CHEBI:58359"/>
        <dbReference type="ChEBI" id="CHEBI:78520"/>
        <dbReference type="ChEBI" id="CHEBI:78521"/>
        <dbReference type="ChEBI" id="CHEBI:456216"/>
    </reaction>
</comment>
<comment type="catalytic activity">
    <reaction evidence="1">
        <text>L-aspartyl-tRNA(Asn) + L-glutamine + ATP + H2O = L-asparaginyl-tRNA(Asn) + L-glutamate + ADP + phosphate + 2 H(+)</text>
        <dbReference type="Rhea" id="RHEA:14513"/>
        <dbReference type="Rhea" id="RHEA-COMP:9674"/>
        <dbReference type="Rhea" id="RHEA-COMP:9677"/>
        <dbReference type="ChEBI" id="CHEBI:15377"/>
        <dbReference type="ChEBI" id="CHEBI:15378"/>
        <dbReference type="ChEBI" id="CHEBI:29985"/>
        <dbReference type="ChEBI" id="CHEBI:30616"/>
        <dbReference type="ChEBI" id="CHEBI:43474"/>
        <dbReference type="ChEBI" id="CHEBI:58359"/>
        <dbReference type="ChEBI" id="CHEBI:78515"/>
        <dbReference type="ChEBI" id="CHEBI:78516"/>
        <dbReference type="ChEBI" id="CHEBI:456216"/>
    </reaction>
</comment>
<comment type="subunit">
    <text evidence="1">Heterotrimer of A, B and C subunits.</text>
</comment>
<comment type="similarity">
    <text evidence="1">Belongs to the GatB/GatE family. GatB subfamily.</text>
</comment>
<protein>
    <recommendedName>
        <fullName evidence="1">Aspartyl/glutamyl-tRNA(Asn/Gln) amidotransferase subunit B</fullName>
        <shortName evidence="1">Asp/Glu-ADT subunit B</shortName>
        <ecNumber evidence="1">6.3.5.-</ecNumber>
    </recommendedName>
</protein>
<evidence type="ECO:0000255" key="1">
    <source>
        <dbReference type="HAMAP-Rule" id="MF_00121"/>
    </source>
</evidence>
<feature type="chain" id="PRO_0000241241" description="Aspartyl/glutamyl-tRNA(Asn/Gln) amidotransferase subunit B">
    <location>
        <begin position="1"/>
        <end position="475"/>
    </location>
</feature>
<accession>Q6KHR6</accession>
<sequence>MNTFETVIGIEIHIELNTKTKMFSPAPNKFNEKPNTLVHPIDVAYPGTLPRLNKEAVVKAIKLAKALNMEIDTLLRFDRKNYFYPDLPKSFQITQQNFPIGKNGTLTIESNGKKKEILIERIHLEEDTAKQIHLNDKTLVDYNRAGVPLIEIVTKPIISNAEEAANYVDMIRKIVSFIDISDAKMSEGSLRADVNISIRPFGQKFLGEKVEIKNLNSVSNLKKAIEFEKNLQIKKILSNEKIESQTKRFDESKNETVVMRTKSKTIDYKYIPEPNIPFIRIPKDFIDKIKVENLPWNIEKKLLSQNISSEFVQQFLNDFQMLLVFESIIYPNREKLSKVFFSELISLANSKNVHIKDLKFNFSEFVIALKFLDNGEISGKHLKTIINEIFTKNEKVEDIVSRNNLRLISDEDLIFNLINKASKDKNEIILEYPNKPEKVLKYLTGFVMKETEGQANPVLSFNLAKKYLDEKFKKV</sequence>
<name>GATB_MYCM1</name>
<organism>
    <name type="scientific">Mycoplasma mobile (strain ATCC 43663 / 163K / NCTC 11711)</name>
    <name type="common">Mesomycoplasma mobile</name>
    <dbReference type="NCBI Taxonomy" id="267748"/>
    <lineage>
        <taxon>Bacteria</taxon>
        <taxon>Bacillati</taxon>
        <taxon>Mycoplasmatota</taxon>
        <taxon>Mycoplasmoidales</taxon>
        <taxon>Metamycoplasmataceae</taxon>
        <taxon>Mesomycoplasma</taxon>
    </lineage>
</organism>
<keyword id="KW-0067">ATP-binding</keyword>
<keyword id="KW-0436">Ligase</keyword>
<keyword id="KW-0547">Nucleotide-binding</keyword>
<keyword id="KW-0648">Protein biosynthesis</keyword>
<keyword id="KW-1185">Reference proteome</keyword>
<gene>
    <name evidence="1" type="primary">gatB</name>
    <name type="ordered locus">MMOB3760</name>
</gene>